<dbReference type="EMBL" id="AE006470">
    <property type="protein sequence ID" value="AAM71650.1"/>
    <property type="molecule type" value="Genomic_DNA"/>
</dbReference>
<dbReference type="RefSeq" id="NP_661308.1">
    <property type="nucleotide sequence ID" value="NC_002932.3"/>
</dbReference>
<dbReference type="RefSeq" id="WP_010932095.1">
    <property type="nucleotide sequence ID" value="NC_002932.3"/>
</dbReference>
<dbReference type="SMR" id="Q8KFC3"/>
<dbReference type="STRING" id="194439.CT0404"/>
<dbReference type="EnsemblBacteria" id="AAM71650">
    <property type="protein sequence ID" value="AAM71650"/>
    <property type="gene ID" value="CT0404"/>
</dbReference>
<dbReference type="KEGG" id="cte:CT0404"/>
<dbReference type="PATRIC" id="fig|194439.7.peg.392"/>
<dbReference type="eggNOG" id="COG1219">
    <property type="taxonomic scope" value="Bacteria"/>
</dbReference>
<dbReference type="HOGENOM" id="CLU_014218_8_2_10"/>
<dbReference type="OrthoDB" id="9804062at2"/>
<dbReference type="Proteomes" id="UP000001007">
    <property type="component" value="Chromosome"/>
</dbReference>
<dbReference type="GO" id="GO:0009376">
    <property type="term" value="C:HslUV protease complex"/>
    <property type="evidence" value="ECO:0007669"/>
    <property type="project" value="TreeGrafter"/>
</dbReference>
<dbReference type="GO" id="GO:0005524">
    <property type="term" value="F:ATP binding"/>
    <property type="evidence" value="ECO:0007669"/>
    <property type="project" value="UniProtKB-UniRule"/>
</dbReference>
<dbReference type="GO" id="GO:0016887">
    <property type="term" value="F:ATP hydrolysis activity"/>
    <property type="evidence" value="ECO:0007669"/>
    <property type="project" value="InterPro"/>
</dbReference>
<dbReference type="GO" id="GO:0140662">
    <property type="term" value="F:ATP-dependent protein folding chaperone"/>
    <property type="evidence" value="ECO:0007669"/>
    <property type="project" value="InterPro"/>
</dbReference>
<dbReference type="GO" id="GO:0046983">
    <property type="term" value="F:protein dimerization activity"/>
    <property type="evidence" value="ECO:0007669"/>
    <property type="project" value="InterPro"/>
</dbReference>
<dbReference type="GO" id="GO:0051082">
    <property type="term" value="F:unfolded protein binding"/>
    <property type="evidence" value="ECO:0007669"/>
    <property type="project" value="UniProtKB-UniRule"/>
</dbReference>
<dbReference type="GO" id="GO:0008270">
    <property type="term" value="F:zinc ion binding"/>
    <property type="evidence" value="ECO:0007669"/>
    <property type="project" value="InterPro"/>
</dbReference>
<dbReference type="GO" id="GO:0051301">
    <property type="term" value="P:cell division"/>
    <property type="evidence" value="ECO:0007669"/>
    <property type="project" value="TreeGrafter"/>
</dbReference>
<dbReference type="GO" id="GO:0051603">
    <property type="term" value="P:proteolysis involved in protein catabolic process"/>
    <property type="evidence" value="ECO:0007669"/>
    <property type="project" value="TreeGrafter"/>
</dbReference>
<dbReference type="CDD" id="cd19497">
    <property type="entry name" value="RecA-like_ClpX"/>
    <property type="match status" value="1"/>
</dbReference>
<dbReference type="FunFam" id="1.10.8.60:FF:000002">
    <property type="entry name" value="ATP-dependent Clp protease ATP-binding subunit ClpX"/>
    <property type="match status" value="1"/>
</dbReference>
<dbReference type="FunFam" id="3.40.50.300:FF:000005">
    <property type="entry name" value="ATP-dependent Clp protease ATP-binding subunit ClpX"/>
    <property type="match status" value="1"/>
</dbReference>
<dbReference type="Gene3D" id="1.10.8.60">
    <property type="match status" value="1"/>
</dbReference>
<dbReference type="Gene3D" id="6.20.220.10">
    <property type="entry name" value="ClpX chaperone, C4-type zinc finger domain"/>
    <property type="match status" value="1"/>
</dbReference>
<dbReference type="Gene3D" id="3.40.50.300">
    <property type="entry name" value="P-loop containing nucleotide triphosphate hydrolases"/>
    <property type="match status" value="1"/>
</dbReference>
<dbReference type="HAMAP" id="MF_00175">
    <property type="entry name" value="ClpX"/>
    <property type="match status" value="1"/>
</dbReference>
<dbReference type="InterPro" id="IPR003593">
    <property type="entry name" value="AAA+_ATPase"/>
</dbReference>
<dbReference type="InterPro" id="IPR050052">
    <property type="entry name" value="ATP-dep_Clp_protease_ClpX"/>
</dbReference>
<dbReference type="InterPro" id="IPR003959">
    <property type="entry name" value="ATPase_AAA_core"/>
</dbReference>
<dbReference type="InterPro" id="IPR019489">
    <property type="entry name" value="Clp_ATPase_C"/>
</dbReference>
<dbReference type="InterPro" id="IPR004487">
    <property type="entry name" value="Clp_protease_ATP-bd_su_ClpX"/>
</dbReference>
<dbReference type="InterPro" id="IPR046425">
    <property type="entry name" value="ClpX_bact"/>
</dbReference>
<dbReference type="InterPro" id="IPR027417">
    <property type="entry name" value="P-loop_NTPase"/>
</dbReference>
<dbReference type="InterPro" id="IPR010603">
    <property type="entry name" value="Znf_CppX_C4"/>
</dbReference>
<dbReference type="InterPro" id="IPR038366">
    <property type="entry name" value="Znf_CppX_C4_sf"/>
</dbReference>
<dbReference type="NCBIfam" id="TIGR00382">
    <property type="entry name" value="clpX"/>
    <property type="match status" value="1"/>
</dbReference>
<dbReference type="NCBIfam" id="NF003745">
    <property type="entry name" value="PRK05342.1"/>
    <property type="match status" value="1"/>
</dbReference>
<dbReference type="PANTHER" id="PTHR48102:SF7">
    <property type="entry name" value="ATP-DEPENDENT CLP PROTEASE ATP-BINDING SUBUNIT CLPX-LIKE, MITOCHONDRIAL"/>
    <property type="match status" value="1"/>
</dbReference>
<dbReference type="PANTHER" id="PTHR48102">
    <property type="entry name" value="ATP-DEPENDENT CLP PROTEASE ATP-BINDING SUBUNIT CLPX-LIKE, MITOCHONDRIAL-RELATED"/>
    <property type="match status" value="1"/>
</dbReference>
<dbReference type="Pfam" id="PF07724">
    <property type="entry name" value="AAA_2"/>
    <property type="match status" value="1"/>
</dbReference>
<dbReference type="Pfam" id="PF10431">
    <property type="entry name" value="ClpB_D2-small"/>
    <property type="match status" value="1"/>
</dbReference>
<dbReference type="Pfam" id="PF06689">
    <property type="entry name" value="zf-C4_ClpX"/>
    <property type="match status" value="1"/>
</dbReference>
<dbReference type="SMART" id="SM00382">
    <property type="entry name" value="AAA"/>
    <property type="match status" value="1"/>
</dbReference>
<dbReference type="SMART" id="SM01086">
    <property type="entry name" value="ClpB_D2-small"/>
    <property type="match status" value="1"/>
</dbReference>
<dbReference type="SMART" id="SM00994">
    <property type="entry name" value="zf-C4_ClpX"/>
    <property type="match status" value="1"/>
</dbReference>
<dbReference type="SUPFAM" id="SSF57716">
    <property type="entry name" value="Glucocorticoid receptor-like (DNA-binding domain)"/>
    <property type="match status" value="1"/>
</dbReference>
<dbReference type="SUPFAM" id="SSF52540">
    <property type="entry name" value="P-loop containing nucleoside triphosphate hydrolases"/>
    <property type="match status" value="1"/>
</dbReference>
<dbReference type="PROSITE" id="PS51902">
    <property type="entry name" value="CLPX_ZB"/>
    <property type="match status" value="1"/>
</dbReference>
<protein>
    <recommendedName>
        <fullName evidence="1">ATP-dependent Clp protease ATP-binding subunit ClpX</fullName>
    </recommendedName>
</protein>
<evidence type="ECO:0000255" key="1">
    <source>
        <dbReference type="HAMAP-Rule" id="MF_00175"/>
    </source>
</evidence>
<evidence type="ECO:0000255" key="2">
    <source>
        <dbReference type="PROSITE-ProRule" id="PRU01250"/>
    </source>
</evidence>
<evidence type="ECO:0000256" key="3">
    <source>
        <dbReference type="SAM" id="MobiDB-lite"/>
    </source>
</evidence>
<comment type="function">
    <text evidence="1">ATP-dependent specificity component of the Clp protease. It directs the protease to specific substrates. Can perform chaperone functions in the absence of ClpP.</text>
</comment>
<comment type="subunit">
    <text evidence="1">Component of the ClpX-ClpP complex. Forms a hexameric ring that, in the presence of ATP, binds to fourteen ClpP subunits assembled into a disk-like structure with a central cavity, resembling the structure of eukaryotic proteasomes.</text>
</comment>
<comment type="similarity">
    <text evidence="1">Belongs to the ClpX chaperone family.</text>
</comment>
<sequence length="439" mass="48332">MIKDKEPRKGQNGGRKSYGSEPPVVCSFCGRTSQEVNSMVAGPRAFICDRCILSSVEILRKEISAIRHPDQSPEPAFQPRLKSPVNIKEALDQYVIGQEQAKKSLAVAVYNHYKRLDAHDWSSGDEVVIEKSNILLIGPTGTGKTLLAQTLANLLEVPFTIADATSLTEAGYVGDDVETILARLLHASDFNLERAERGIIYVDEIDKIARKSANVSITRDVSGEGVQQALLKILEGSVVGVPPKGGRKHPEQQLININTKNILFICGGAFEGLDKIIARRVSKSSMGFGSKVRGKQTGYDPEILKLVTQDDLHDYGLIPEFIGRLPVMSVLEPLDAVALRNILVEPKNALVKQYKRLFEMDGVELEFTDEALERVVAIAIERGTGARALRSVLENVMIDIMFELPTRKDVQKCVITAETIDKTGGPVYEKKDGKERKIA</sequence>
<feature type="chain" id="PRO_0000160339" description="ATP-dependent Clp protease ATP-binding subunit ClpX">
    <location>
        <begin position="1"/>
        <end position="439"/>
    </location>
</feature>
<feature type="domain" description="ClpX-type ZB" evidence="2">
    <location>
        <begin position="14"/>
        <end position="67"/>
    </location>
</feature>
<feature type="region of interest" description="Disordered" evidence="3">
    <location>
        <begin position="1"/>
        <end position="20"/>
    </location>
</feature>
<feature type="binding site" evidence="2">
    <location>
        <position position="26"/>
    </location>
    <ligand>
        <name>Zn(2+)</name>
        <dbReference type="ChEBI" id="CHEBI:29105"/>
    </ligand>
</feature>
<feature type="binding site" evidence="2">
    <location>
        <position position="29"/>
    </location>
    <ligand>
        <name>Zn(2+)</name>
        <dbReference type="ChEBI" id="CHEBI:29105"/>
    </ligand>
</feature>
<feature type="binding site" evidence="2">
    <location>
        <position position="48"/>
    </location>
    <ligand>
        <name>Zn(2+)</name>
        <dbReference type="ChEBI" id="CHEBI:29105"/>
    </ligand>
</feature>
<feature type="binding site" evidence="2">
    <location>
        <position position="51"/>
    </location>
    <ligand>
        <name>Zn(2+)</name>
        <dbReference type="ChEBI" id="CHEBI:29105"/>
    </ligand>
</feature>
<feature type="binding site" evidence="1">
    <location>
        <begin position="139"/>
        <end position="146"/>
    </location>
    <ligand>
        <name>ATP</name>
        <dbReference type="ChEBI" id="CHEBI:30616"/>
    </ligand>
</feature>
<name>CLPX_CHLTE</name>
<organism>
    <name type="scientific">Chlorobaculum tepidum (strain ATCC 49652 / DSM 12025 / NBRC 103806 / TLS)</name>
    <name type="common">Chlorobium tepidum</name>
    <dbReference type="NCBI Taxonomy" id="194439"/>
    <lineage>
        <taxon>Bacteria</taxon>
        <taxon>Pseudomonadati</taxon>
        <taxon>Chlorobiota</taxon>
        <taxon>Chlorobiia</taxon>
        <taxon>Chlorobiales</taxon>
        <taxon>Chlorobiaceae</taxon>
        <taxon>Chlorobaculum</taxon>
    </lineage>
</organism>
<keyword id="KW-0067">ATP-binding</keyword>
<keyword id="KW-0143">Chaperone</keyword>
<keyword id="KW-0479">Metal-binding</keyword>
<keyword id="KW-0547">Nucleotide-binding</keyword>
<keyword id="KW-1185">Reference proteome</keyword>
<keyword id="KW-0862">Zinc</keyword>
<reference key="1">
    <citation type="journal article" date="2002" name="Proc. Natl. Acad. Sci. U.S.A.">
        <title>The complete genome sequence of Chlorobium tepidum TLS, a photosynthetic, anaerobic, green-sulfur bacterium.</title>
        <authorList>
            <person name="Eisen J.A."/>
            <person name="Nelson K.E."/>
            <person name="Paulsen I.T."/>
            <person name="Heidelberg J.F."/>
            <person name="Wu M."/>
            <person name="Dodson R.J."/>
            <person name="DeBoy R.T."/>
            <person name="Gwinn M.L."/>
            <person name="Nelson W.C."/>
            <person name="Haft D.H."/>
            <person name="Hickey E.K."/>
            <person name="Peterson J.D."/>
            <person name="Durkin A.S."/>
            <person name="Kolonay J.F."/>
            <person name="Yang F."/>
            <person name="Holt I.E."/>
            <person name="Umayam L.A."/>
            <person name="Mason T.M."/>
            <person name="Brenner M."/>
            <person name="Shea T.P."/>
            <person name="Parksey D.S."/>
            <person name="Nierman W.C."/>
            <person name="Feldblyum T.V."/>
            <person name="Hansen C.L."/>
            <person name="Craven M.B."/>
            <person name="Radune D."/>
            <person name="Vamathevan J.J."/>
            <person name="Khouri H.M."/>
            <person name="White O."/>
            <person name="Gruber T.M."/>
            <person name="Ketchum K.A."/>
            <person name="Venter J.C."/>
            <person name="Tettelin H."/>
            <person name="Bryant D.A."/>
            <person name="Fraser C.M."/>
        </authorList>
    </citation>
    <scope>NUCLEOTIDE SEQUENCE [LARGE SCALE GENOMIC DNA]</scope>
    <source>
        <strain>ATCC 49652 / DSM 12025 / NBRC 103806 / TLS</strain>
    </source>
</reference>
<gene>
    <name evidence="1" type="primary">clpX</name>
    <name type="ordered locus">CT0404</name>
</gene>
<proteinExistence type="inferred from homology"/>
<accession>Q8KFC3</accession>